<protein>
    <recommendedName>
        <fullName>V-type proton ATPase catalytic subunit A</fullName>
        <shortName>V-ATPase subunit A</shortName>
        <ecNumber evidence="1">7.1.2.2</ecNumber>
    </recommendedName>
    <alternativeName>
        <fullName>V-ATPase 67 kDa subunit</fullName>
    </alternativeName>
    <alternativeName>
        <fullName>Vacuolar proton pump subunit alpha</fullName>
    </alternativeName>
</protein>
<dbReference type="EC" id="7.1.2.2" evidence="1"/>
<dbReference type="EMBL" id="J03955">
    <property type="protein sequence ID" value="AAA33621.1"/>
    <property type="molecule type" value="Genomic_DNA"/>
</dbReference>
<dbReference type="EMBL" id="AL670011">
    <property type="protein sequence ID" value="CAD21414.1"/>
    <property type="molecule type" value="Genomic_DNA"/>
</dbReference>
<dbReference type="EMBL" id="CM002240">
    <property type="protein sequence ID" value="EAA32337.1"/>
    <property type="molecule type" value="Genomic_DNA"/>
</dbReference>
<dbReference type="PIR" id="A30799">
    <property type="entry name" value="PXNCV7"/>
</dbReference>
<dbReference type="RefSeq" id="XP_961573.1">
    <property type="nucleotide sequence ID" value="XM_956480.3"/>
</dbReference>
<dbReference type="SMR" id="P11592"/>
<dbReference type="FunCoup" id="P11592">
    <property type="interactions" value="1027"/>
</dbReference>
<dbReference type="STRING" id="367110.P11592"/>
<dbReference type="PaxDb" id="5141-EFNCRP00000004274"/>
<dbReference type="EnsemblFungi" id="EAA32337">
    <property type="protein sequence ID" value="EAA32337"/>
    <property type="gene ID" value="NCU01207"/>
</dbReference>
<dbReference type="GeneID" id="3877696"/>
<dbReference type="KEGG" id="ncr:NCU01207"/>
<dbReference type="VEuPathDB" id="FungiDB:NCU01207"/>
<dbReference type="HOGENOM" id="CLU_008162_3_1_1"/>
<dbReference type="InParanoid" id="P11592"/>
<dbReference type="OMA" id="RIVKTFW"/>
<dbReference type="OrthoDB" id="1676488at2759"/>
<dbReference type="Proteomes" id="UP000001805">
    <property type="component" value="Chromosome 2, Linkage Group V"/>
</dbReference>
<dbReference type="GO" id="GO:0000329">
    <property type="term" value="C:fungal-type vacuole membrane"/>
    <property type="evidence" value="ECO:0000318"/>
    <property type="project" value="GO_Central"/>
</dbReference>
<dbReference type="GO" id="GO:0000221">
    <property type="term" value="C:vacuolar proton-transporting V-type ATPase, V1 domain"/>
    <property type="evidence" value="ECO:0000250"/>
    <property type="project" value="UniProtKB"/>
</dbReference>
<dbReference type="GO" id="GO:0005524">
    <property type="term" value="F:ATP binding"/>
    <property type="evidence" value="ECO:0007669"/>
    <property type="project" value="UniProtKB-KW"/>
</dbReference>
<dbReference type="GO" id="GO:0016887">
    <property type="term" value="F:ATP hydrolysis activity"/>
    <property type="evidence" value="ECO:0007669"/>
    <property type="project" value="InterPro"/>
</dbReference>
<dbReference type="GO" id="GO:0046961">
    <property type="term" value="F:proton-transporting ATPase activity, rotational mechanism"/>
    <property type="evidence" value="ECO:0000318"/>
    <property type="project" value="GO_Central"/>
</dbReference>
<dbReference type="GO" id="GO:0046034">
    <property type="term" value="P:ATP metabolic process"/>
    <property type="evidence" value="ECO:0007669"/>
    <property type="project" value="InterPro"/>
</dbReference>
<dbReference type="GO" id="GO:0090465">
    <property type="term" value="P:intracellular arginine homeostasis"/>
    <property type="evidence" value="ECO:0007669"/>
    <property type="project" value="EnsemblFungi"/>
</dbReference>
<dbReference type="GO" id="GO:0090464">
    <property type="term" value="P:intracellular histidine homeostasis"/>
    <property type="evidence" value="ECO:0007669"/>
    <property type="project" value="EnsemblFungi"/>
</dbReference>
<dbReference type="GO" id="GO:0090463">
    <property type="term" value="P:intracellular lysine homeostasis"/>
    <property type="evidence" value="ECO:0007669"/>
    <property type="project" value="EnsemblFungi"/>
</dbReference>
<dbReference type="GO" id="GO:1902600">
    <property type="term" value="P:proton transmembrane transport"/>
    <property type="evidence" value="ECO:0000318"/>
    <property type="project" value="GO_Central"/>
</dbReference>
<dbReference type="GO" id="GO:0007035">
    <property type="term" value="P:vacuolar acidification"/>
    <property type="evidence" value="ECO:0007669"/>
    <property type="project" value="EnsemblFungi"/>
</dbReference>
<dbReference type="CDD" id="cd18111">
    <property type="entry name" value="ATP-synt_V_A-type_alpha_C"/>
    <property type="match status" value="1"/>
</dbReference>
<dbReference type="CDD" id="cd18119">
    <property type="entry name" value="ATP-synt_V_A-type_alpha_N"/>
    <property type="match status" value="1"/>
</dbReference>
<dbReference type="CDD" id="cd01134">
    <property type="entry name" value="V_A-ATPase_A"/>
    <property type="match status" value="1"/>
</dbReference>
<dbReference type="FunFam" id="2.40.30.20:FF:000002">
    <property type="entry name" value="V-type proton ATPase catalytic subunit A"/>
    <property type="match status" value="1"/>
</dbReference>
<dbReference type="FunFam" id="2.40.50.100:FF:000008">
    <property type="entry name" value="V-type proton ATPase catalytic subunit A"/>
    <property type="match status" value="1"/>
</dbReference>
<dbReference type="FunFam" id="3.40.50.300:FF:000052">
    <property type="entry name" value="V-type proton ATPase catalytic subunit A"/>
    <property type="match status" value="1"/>
</dbReference>
<dbReference type="FunFam" id="1.10.1140.10:FF:000003">
    <property type="entry name" value="Vacuolar ATP synthase catalytic subunit A"/>
    <property type="match status" value="1"/>
</dbReference>
<dbReference type="Gene3D" id="2.40.30.20">
    <property type="match status" value="1"/>
</dbReference>
<dbReference type="Gene3D" id="2.40.50.100">
    <property type="match status" value="1"/>
</dbReference>
<dbReference type="Gene3D" id="1.10.1140.10">
    <property type="entry name" value="Bovine Mitochondrial F1-atpase, Atp Synthase Beta Chain, Chain D, domain 3"/>
    <property type="match status" value="1"/>
</dbReference>
<dbReference type="Gene3D" id="3.40.50.300">
    <property type="entry name" value="P-loop containing nucleotide triphosphate hydrolases"/>
    <property type="match status" value="1"/>
</dbReference>
<dbReference type="HAMAP" id="MF_00309">
    <property type="entry name" value="ATP_synth_A_arch"/>
    <property type="match status" value="1"/>
</dbReference>
<dbReference type="InterPro" id="IPR055190">
    <property type="entry name" value="ATP-synt_VA_C"/>
</dbReference>
<dbReference type="InterPro" id="IPR031686">
    <property type="entry name" value="ATP-synth_a_Xtn"/>
</dbReference>
<dbReference type="InterPro" id="IPR023366">
    <property type="entry name" value="ATP_synth_asu-like_sf"/>
</dbReference>
<dbReference type="InterPro" id="IPR020003">
    <property type="entry name" value="ATPase_a/bsu_AS"/>
</dbReference>
<dbReference type="InterPro" id="IPR004100">
    <property type="entry name" value="ATPase_F1/V1/A1_a/bsu_N"/>
</dbReference>
<dbReference type="InterPro" id="IPR036121">
    <property type="entry name" value="ATPase_F1/V1/A1_a/bsu_N_sf"/>
</dbReference>
<dbReference type="InterPro" id="IPR000194">
    <property type="entry name" value="ATPase_F1/V1/A1_a/bsu_nucl-bd"/>
</dbReference>
<dbReference type="InterPro" id="IPR024034">
    <property type="entry name" value="ATPase_F1/V1_b/a_C"/>
</dbReference>
<dbReference type="InterPro" id="IPR005725">
    <property type="entry name" value="ATPase_V1-cplx_asu"/>
</dbReference>
<dbReference type="InterPro" id="IPR027417">
    <property type="entry name" value="P-loop_NTPase"/>
</dbReference>
<dbReference type="InterPro" id="IPR022878">
    <property type="entry name" value="V-ATPase_asu"/>
</dbReference>
<dbReference type="NCBIfam" id="NF003220">
    <property type="entry name" value="PRK04192.1"/>
    <property type="match status" value="1"/>
</dbReference>
<dbReference type="NCBIfam" id="TIGR01042">
    <property type="entry name" value="V-ATPase_V1_A"/>
    <property type="match status" value="1"/>
</dbReference>
<dbReference type="PANTHER" id="PTHR43607:SF1">
    <property type="entry name" value="H(+)-TRANSPORTING TWO-SECTOR ATPASE"/>
    <property type="match status" value="1"/>
</dbReference>
<dbReference type="PANTHER" id="PTHR43607">
    <property type="entry name" value="V-TYPE PROTON ATPASE CATALYTIC SUBUNIT A"/>
    <property type="match status" value="1"/>
</dbReference>
<dbReference type="Pfam" id="PF00006">
    <property type="entry name" value="ATP-synt_ab"/>
    <property type="match status" value="1"/>
</dbReference>
<dbReference type="Pfam" id="PF02874">
    <property type="entry name" value="ATP-synt_ab_N"/>
    <property type="match status" value="1"/>
</dbReference>
<dbReference type="Pfam" id="PF16886">
    <property type="entry name" value="ATP-synt_ab_Xtn"/>
    <property type="match status" value="1"/>
</dbReference>
<dbReference type="Pfam" id="PF22919">
    <property type="entry name" value="ATP-synt_VA_C"/>
    <property type="match status" value="1"/>
</dbReference>
<dbReference type="SUPFAM" id="SSF47917">
    <property type="entry name" value="C-terminal domain of alpha and beta subunits of F1 ATP synthase"/>
    <property type="match status" value="1"/>
</dbReference>
<dbReference type="SUPFAM" id="SSF50615">
    <property type="entry name" value="N-terminal domain of alpha and beta subunits of F1 ATP synthase"/>
    <property type="match status" value="1"/>
</dbReference>
<dbReference type="SUPFAM" id="SSF52540">
    <property type="entry name" value="P-loop containing nucleoside triphosphate hydrolases"/>
    <property type="match status" value="1"/>
</dbReference>
<dbReference type="PROSITE" id="PS00152">
    <property type="entry name" value="ATPASE_ALPHA_BETA"/>
    <property type="match status" value="1"/>
</dbReference>
<comment type="function">
    <text evidence="1">Catalytic subunit of the V1 complex of vacuolar(H+)-ATPase (V-ATPase), a multisubunit enzyme composed of a peripheral complex (V1) that hydrolyzes ATP and a membrane integral complex (V0) that translocates protons (By similarity). V-ATPase is responsible for acidifying and maintaining the pH of intracellular compartments (By similarity).</text>
</comment>
<comment type="catalytic activity">
    <reaction evidence="1">
        <text>ATP + H2O + 4 H(+)(in) = ADP + phosphate + 5 H(+)(out)</text>
        <dbReference type="Rhea" id="RHEA:57720"/>
        <dbReference type="ChEBI" id="CHEBI:15377"/>
        <dbReference type="ChEBI" id="CHEBI:15378"/>
        <dbReference type="ChEBI" id="CHEBI:30616"/>
        <dbReference type="ChEBI" id="CHEBI:43474"/>
        <dbReference type="ChEBI" id="CHEBI:456216"/>
        <dbReference type="EC" id="7.1.2.2"/>
    </reaction>
</comment>
<comment type="subunit">
    <text evidence="1">V-ATPase is a heteromultimeric enzyme composed of a peripheral catalytic V1 complex (components A to H) attached to an integral membrane V0 proton pore complex (components: a, c, c', c'', d, e, f and VOA1).</text>
</comment>
<comment type="subcellular location">
    <subcellularLocation>
        <location evidence="1">Vacuole membrane</location>
        <topology evidence="1">Peripheral membrane protein</topology>
        <orientation evidence="1">Cytoplasmic side</orientation>
    </subcellularLocation>
</comment>
<comment type="similarity">
    <text evidence="3">Belongs to the ATPase alpha/beta chains family.</text>
</comment>
<accession>P11592</accession>
<accession>Q7RVE0</accession>
<evidence type="ECO:0000250" key="1">
    <source>
        <dbReference type="UniProtKB" id="P17255"/>
    </source>
</evidence>
<evidence type="ECO:0000255" key="2">
    <source>
        <dbReference type="PROSITE-ProRule" id="PRU00499"/>
    </source>
</evidence>
<evidence type="ECO:0000305" key="3"/>
<feature type="chain" id="PRO_0000144589" description="V-type proton ATPase catalytic subunit A">
    <location>
        <begin position="1"/>
        <end position="607"/>
    </location>
</feature>
<feature type="binding site" evidence="2">
    <location>
        <begin position="246"/>
        <end position="253"/>
    </location>
    <ligand>
        <name>ATP</name>
        <dbReference type="ChEBI" id="CHEBI:30616"/>
    </ligand>
</feature>
<organism>
    <name type="scientific">Neurospora crassa (strain ATCC 24698 / 74-OR23-1A / CBS 708.71 / DSM 1257 / FGSC 987)</name>
    <dbReference type="NCBI Taxonomy" id="367110"/>
    <lineage>
        <taxon>Eukaryota</taxon>
        <taxon>Fungi</taxon>
        <taxon>Dikarya</taxon>
        <taxon>Ascomycota</taxon>
        <taxon>Pezizomycotina</taxon>
        <taxon>Sordariomycetes</taxon>
        <taxon>Sordariomycetidae</taxon>
        <taxon>Sordariales</taxon>
        <taxon>Sordariaceae</taxon>
        <taxon>Neurospora</taxon>
    </lineage>
</organism>
<sequence>MAPQQNGAEVDGIHTGKIYSVSGPVVVAEDMIGVAMYELVKVGHDQLVGEVIRINGDQATIQVYEETAGVMVGDPVLRTGKPLSVELGPGLLNNIYDGIQRPLEKIAEASNSIYIPRGIATPALDRKKKWEFTPTMKVGDHIAGGDVWGTVYENSFISVHKILLPPRARGTITRIAEKGEYTVEEKILEVEFDGKKTEYPMMQTWPVRVPRPAAEKHSANQPFLVGQRVLDALFPSVQGGTVAIPGAFGCGKTVISQSVSKFSNSDVIVYVGCGERGNEMAEVLKDFPELSIEVDGRKEPIMKRTTLIANTSNMPVAAREASIYTGITVAEYFRDQGMNVAMMADSSSRWAEALREISGRLGEMPADQGFPAYLGAKLASFYERAGKVQALGSPPREGSVSIVGAVSPPGGDFSDPVTSATLGIVQVFWGLDKKLAQRKHFPSINTSVSYSKYLTILDKWYEREYPDFPRLRDRIRQLLSDSEELDQVVQLVGKSALSDPDKITLDMATLIKEDFLQQNGYSDYDQFCPIWKTEWMMKLMMGFHDEAQKAIAQGQNWNKVREATQDLQAQLKSLKFEVPSEGQEKICKKYEAIQQQMLDKFASVIDE</sequence>
<proteinExistence type="inferred from homology"/>
<reference key="1">
    <citation type="journal article" date="1988" name="J. Biol. Chem.">
        <title>Isolation of genes encoding the Neurospora vacuolar ATPase. Analysis of vma-1 encoding the 67-kDa subunit reveals homology to other ATPases.</title>
        <authorList>
            <person name="Bowman E.J."/>
            <person name="Tenney K."/>
            <person name="Bowman B.J."/>
        </authorList>
    </citation>
    <scope>NUCLEOTIDE SEQUENCE [GENOMIC DNA]</scope>
</reference>
<reference key="2">
    <citation type="journal article" date="2003" name="Nucleic Acids Res.">
        <title>What's in the genome of a filamentous fungus? Analysis of the Neurospora genome sequence.</title>
        <authorList>
            <person name="Mannhaupt G."/>
            <person name="Montrone C."/>
            <person name="Haase D."/>
            <person name="Mewes H.-W."/>
            <person name="Aign V."/>
            <person name="Hoheisel J.D."/>
            <person name="Fartmann B."/>
            <person name="Nyakatura G."/>
            <person name="Kempken F."/>
            <person name="Maier J."/>
            <person name="Schulte U."/>
        </authorList>
    </citation>
    <scope>NUCLEOTIDE SEQUENCE [LARGE SCALE GENOMIC DNA]</scope>
    <source>
        <strain>ATCC 24698 / 74-OR23-1A / CBS 708.71 / DSM 1257 / FGSC 987</strain>
    </source>
</reference>
<reference key="3">
    <citation type="journal article" date="2003" name="Nature">
        <title>The genome sequence of the filamentous fungus Neurospora crassa.</title>
        <authorList>
            <person name="Galagan J.E."/>
            <person name="Calvo S.E."/>
            <person name="Borkovich K.A."/>
            <person name="Selker E.U."/>
            <person name="Read N.D."/>
            <person name="Jaffe D.B."/>
            <person name="FitzHugh W."/>
            <person name="Ma L.-J."/>
            <person name="Smirnov S."/>
            <person name="Purcell S."/>
            <person name="Rehman B."/>
            <person name="Elkins T."/>
            <person name="Engels R."/>
            <person name="Wang S."/>
            <person name="Nielsen C.B."/>
            <person name="Butler J."/>
            <person name="Endrizzi M."/>
            <person name="Qui D."/>
            <person name="Ianakiev P."/>
            <person name="Bell-Pedersen D."/>
            <person name="Nelson M.A."/>
            <person name="Werner-Washburne M."/>
            <person name="Selitrennikoff C.P."/>
            <person name="Kinsey J.A."/>
            <person name="Braun E.L."/>
            <person name="Zelter A."/>
            <person name="Schulte U."/>
            <person name="Kothe G.O."/>
            <person name="Jedd G."/>
            <person name="Mewes H.-W."/>
            <person name="Staben C."/>
            <person name="Marcotte E."/>
            <person name="Greenberg D."/>
            <person name="Roy A."/>
            <person name="Foley K."/>
            <person name="Naylor J."/>
            <person name="Stange-Thomann N."/>
            <person name="Barrett R."/>
            <person name="Gnerre S."/>
            <person name="Kamal M."/>
            <person name="Kamvysselis M."/>
            <person name="Mauceli E.W."/>
            <person name="Bielke C."/>
            <person name="Rudd S."/>
            <person name="Frishman D."/>
            <person name="Krystofova S."/>
            <person name="Rasmussen C."/>
            <person name="Metzenberg R.L."/>
            <person name="Perkins D.D."/>
            <person name="Kroken S."/>
            <person name="Cogoni C."/>
            <person name="Macino G."/>
            <person name="Catcheside D.E.A."/>
            <person name="Li W."/>
            <person name="Pratt R.J."/>
            <person name="Osmani S.A."/>
            <person name="DeSouza C.P.C."/>
            <person name="Glass N.L."/>
            <person name="Orbach M.J."/>
            <person name="Berglund J.A."/>
            <person name="Voelker R."/>
            <person name="Yarden O."/>
            <person name="Plamann M."/>
            <person name="Seiler S."/>
            <person name="Dunlap J.C."/>
            <person name="Radford A."/>
            <person name="Aramayo R."/>
            <person name="Natvig D.O."/>
            <person name="Alex L.A."/>
            <person name="Mannhaupt G."/>
            <person name="Ebbole D.J."/>
            <person name="Freitag M."/>
            <person name="Paulsen I."/>
            <person name="Sachs M.S."/>
            <person name="Lander E.S."/>
            <person name="Nusbaum C."/>
            <person name="Birren B.W."/>
        </authorList>
    </citation>
    <scope>NUCLEOTIDE SEQUENCE [LARGE SCALE GENOMIC DNA]</scope>
    <source>
        <strain>ATCC 24698 / 74-OR23-1A / CBS 708.71 / DSM 1257 / FGSC 987</strain>
    </source>
</reference>
<gene>
    <name type="primary">vma-1</name>
    <name type="ORF">18F11.090</name>
    <name type="ORF">NCU01207</name>
</gene>
<name>VATA_NEUCR</name>
<keyword id="KW-0067">ATP-binding</keyword>
<keyword id="KW-0375">Hydrogen ion transport</keyword>
<keyword id="KW-0406">Ion transport</keyword>
<keyword id="KW-0472">Membrane</keyword>
<keyword id="KW-0547">Nucleotide-binding</keyword>
<keyword id="KW-1185">Reference proteome</keyword>
<keyword id="KW-1278">Translocase</keyword>
<keyword id="KW-0813">Transport</keyword>
<keyword id="KW-0926">Vacuole</keyword>